<feature type="chain" id="PRO_0000087917" description="Putative type II methyltransferase M.MjaORF1200P">
    <location>
        <begin position="1"/>
        <end position="366"/>
    </location>
</feature>
<feature type="domain" description="SAM-dependent MTase C5-type" evidence="1">
    <location>
        <begin position="5"/>
        <end position="366"/>
    </location>
</feature>
<feature type="active site" evidence="1">
    <location>
        <position position="133"/>
    </location>
</feature>
<name>MTM7_METJA</name>
<gene>
    <name type="ordered locus">MJ1200</name>
</gene>
<evidence type="ECO:0000255" key="1">
    <source>
        <dbReference type="PROSITE-ProRule" id="PRU01016"/>
    </source>
</evidence>
<evidence type="ECO:0000303" key="2">
    <source>
    </source>
</evidence>
<protein>
    <recommendedName>
        <fullName evidence="2">Putative type II methyltransferase M.MjaORF1200P</fullName>
        <shortName evidence="2">M.MjaORF1200P</shortName>
        <ecNumber>2.1.1.37</ecNumber>
    </recommendedName>
    <alternativeName>
        <fullName>Cytosine-specific methyltransferase MJ1200</fullName>
    </alternativeName>
</protein>
<dbReference type="EC" id="2.1.1.37"/>
<dbReference type="EMBL" id="L77117">
    <property type="protein sequence ID" value="AAB99203.1"/>
    <property type="molecule type" value="Genomic_DNA"/>
</dbReference>
<dbReference type="PIR" id="G64449">
    <property type="entry name" value="G64449"/>
</dbReference>
<dbReference type="SMR" id="Q58600"/>
<dbReference type="FunCoup" id="Q58600">
    <property type="interactions" value="20"/>
</dbReference>
<dbReference type="STRING" id="243232.MJ_1200"/>
<dbReference type="REBASE" id="3906">
    <property type="entry name" value="M.MjaORF1200P"/>
</dbReference>
<dbReference type="PaxDb" id="243232-MJ_1200"/>
<dbReference type="EnsemblBacteria" id="AAB99203">
    <property type="protein sequence ID" value="AAB99203"/>
    <property type="gene ID" value="MJ_1200"/>
</dbReference>
<dbReference type="KEGG" id="mja:MJ_1200"/>
<dbReference type="eggNOG" id="arCOG04157">
    <property type="taxonomic scope" value="Archaea"/>
</dbReference>
<dbReference type="HOGENOM" id="CLU_006958_2_2_2"/>
<dbReference type="InParanoid" id="Q58600"/>
<dbReference type="PhylomeDB" id="Q58600"/>
<dbReference type="PRO" id="PR:Q58600"/>
<dbReference type="Proteomes" id="UP000000805">
    <property type="component" value="Chromosome"/>
</dbReference>
<dbReference type="GO" id="GO:0003886">
    <property type="term" value="F:DNA (cytosine-5-)-methyltransferase activity"/>
    <property type="evidence" value="ECO:0000318"/>
    <property type="project" value="GO_Central"/>
</dbReference>
<dbReference type="GO" id="GO:0003677">
    <property type="term" value="F:DNA binding"/>
    <property type="evidence" value="ECO:0000318"/>
    <property type="project" value="GO_Central"/>
</dbReference>
<dbReference type="GO" id="GO:0009307">
    <property type="term" value="P:DNA restriction-modification system"/>
    <property type="evidence" value="ECO:0007669"/>
    <property type="project" value="UniProtKB-KW"/>
</dbReference>
<dbReference type="GO" id="GO:0032259">
    <property type="term" value="P:methylation"/>
    <property type="evidence" value="ECO:0007669"/>
    <property type="project" value="UniProtKB-KW"/>
</dbReference>
<dbReference type="GO" id="GO:0044027">
    <property type="term" value="P:negative regulation of gene expression via chromosomal CpG island methylation"/>
    <property type="evidence" value="ECO:0000318"/>
    <property type="project" value="GO_Central"/>
</dbReference>
<dbReference type="Gene3D" id="3.90.120.10">
    <property type="entry name" value="DNA Methylase, subunit A, domain 2"/>
    <property type="match status" value="1"/>
</dbReference>
<dbReference type="Gene3D" id="3.40.50.150">
    <property type="entry name" value="Vaccinia Virus protein VP39"/>
    <property type="match status" value="1"/>
</dbReference>
<dbReference type="InterPro" id="IPR050390">
    <property type="entry name" value="C5-Methyltransferase"/>
</dbReference>
<dbReference type="InterPro" id="IPR001525">
    <property type="entry name" value="C5_MeTfrase"/>
</dbReference>
<dbReference type="InterPro" id="IPR029063">
    <property type="entry name" value="SAM-dependent_MTases_sf"/>
</dbReference>
<dbReference type="PANTHER" id="PTHR10629">
    <property type="entry name" value="CYTOSINE-SPECIFIC METHYLTRANSFERASE"/>
    <property type="match status" value="1"/>
</dbReference>
<dbReference type="PANTHER" id="PTHR10629:SF52">
    <property type="entry name" value="DNA (CYTOSINE-5)-METHYLTRANSFERASE 1"/>
    <property type="match status" value="1"/>
</dbReference>
<dbReference type="Pfam" id="PF00145">
    <property type="entry name" value="DNA_methylase"/>
    <property type="match status" value="2"/>
</dbReference>
<dbReference type="PRINTS" id="PR00105">
    <property type="entry name" value="C5METTRFRASE"/>
</dbReference>
<dbReference type="SUPFAM" id="SSF53335">
    <property type="entry name" value="S-adenosyl-L-methionine-dependent methyltransferases"/>
    <property type="match status" value="1"/>
</dbReference>
<dbReference type="PROSITE" id="PS51679">
    <property type="entry name" value="SAM_MT_C5"/>
    <property type="match status" value="1"/>
</dbReference>
<accession>Q58600</accession>
<sequence>MVIMLKFIDLFCGCGGFSRGFVEEGFEPLVAIELNEDAAFSYALNFNGQIYEKIRPGEFKLKELKGYVGIYPFKFPFEEEDIKWLKRLGTLNEKTKKLSPVVINDDIREIHAIEIEKFIKNKKVDVIIGGPPCEGYTGANPKREKNPYDRLYKDETGRLVLEYIRIVGDLQPKIFVMENVPGIKEVRGAIIKEFREIGYEDVYFNTLRAEDYGNPSVRRRVFVSNIEINPEKTQPKTVIEAIGDLMYKGRDVPNHEFAALPARFRKRVHKLGWGDAFIYFKGANRRLGNYIRLHPLKLAETVMGKRFFIHPYEDRLLTPREQARLMSYPDYHLFAGGIRSCYNQIGESVPVALSRAIARVIKENLK</sequence>
<organism>
    <name type="scientific">Methanocaldococcus jannaschii (strain ATCC 43067 / DSM 2661 / JAL-1 / JCM 10045 / NBRC 100440)</name>
    <name type="common">Methanococcus jannaschii</name>
    <dbReference type="NCBI Taxonomy" id="243232"/>
    <lineage>
        <taxon>Archaea</taxon>
        <taxon>Methanobacteriati</taxon>
        <taxon>Methanobacteriota</taxon>
        <taxon>Methanomada group</taxon>
        <taxon>Methanococci</taxon>
        <taxon>Methanococcales</taxon>
        <taxon>Methanocaldococcaceae</taxon>
        <taxon>Methanocaldococcus</taxon>
    </lineage>
</organism>
<keyword id="KW-0238">DNA-binding</keyword>
<keyword id="KW-0489">Methyltransferase</keyword>
<keyword id="KW-1185">Reference proteome</keyword>
<keyword id="KW-0680">Restriction system</keyword>
<keyword id="KW-0949">S-adenosyl-L-methionine</keyword>
<keyword id="KW-0808">Transferase</keyword>
<comment type="function">
    <text evidence="2">A putative methylase that probably protects DNA from cleavage by the MjaORF1200P endonuclease.</text>
</comment>
<comment type="catalytic activity">
    <reaction>
        <text>a 2'-deoxycytidine in DNA + S-adenosyl-L-methionine = a 5-methyl-2'-deoxycytidine in DNA + S-adenosyl-L-homocysteine + H(+)</text>
        <dbReference type="Rhea" id="RHEA:13681"/>
        <dbReference type="Rhea" id="RHEA-COMP:11369"/>
        <dbReference type="Rhea" id="RHEA-COMP:11370"/>
        <dbReference type="ChEBI" id="CHEBI:15378"/>
        <dbReference type="ChEBI" id="CHEBI:57856"/>
        <dbReference type="ChEBI" id="CHEBI:59789"/>
        <dbReference type="ChEBI" id="CHEBI:85452"/>
        <dbReference type="ChEBI" id="CHEBI:85454"/>
        <dbReference type="EC" id="2.1.1.37"/>
    </reaction>
</comment>
<comment type="similarity">
    <text evidence="1">Belongs to the class I-like SAM-binding methyltransferase superfamily. C5-methyltransferase family.</text>
</comment>
<reference key="1">
    <citation type="journal article" date="1996" name="Science">
        <title>Complete genome sequence of the methanogenic archaeon, Methanococcus jannaschii.</title>
        <authorList>
            <person name="Bult C.J."/>
            <person name="White O."/>
            <person name="Olsen G.J."/>
            <person name="Zhou L."/>
            <person name="Fleischmann R.D."/>
            <person name="Sutton G.G."/>
            <person name="Blake J.A."/>
            <person name="FitzGerald L.M."/>
            <person name="Clayton R.A."/>
            <person name="Gocayne J.D."/>
            <person name="Kerlavage A.R."/>
            <person name="Dougherty B.A."/>
            <person name="Tomb J.-F."/>
            <person name="Adams M.D."/>
            <person name="Reich C.I."/>
            <person name="Overbeek R."/>
            <person name="Kirkness E.F."/>
            <person name="Weinstock K.G."/>
            <person name="Merrick J.M."/>
            <person name="Glodek A."/>
            <person name="Scott J.L."/>
            <person name="Geoghagen N.S.M."/>
            <person name="Weidman J.F."/>
            <person name="Fuhrmann J.L."/>
            <person name="Nguyen D."/>
            <person name="Utterback T.R."/>
            <person name="Kelley J.M."/>
            <person name="Peterson J.D."/>
            <person name="Sadow P.W."/>
            <person name="Hanna M.C."/>
            <person name="Cotton M.D."/>
            <person name="Roberts K.M."/>
            <person name="Hurst M.A."/>
            <person name="Kaine B.P."/>
            <person name="Borodovsky M."/>
            <person name="Klenk H.-P."/>
            <person name="Fraser C.M."/>
            <person name="Smith H.O."/>
            <person name="Woese C.R."/>
            <person name="Venter J.C."/>
        </authorList>
    </citation>
    <scope>NUCLEOTIDE SEQUENCE [LARGE SCALE GENOMIC DNA]</scope>
    <source>
        <strain>ATCC 43067 / DSM 2661 / JAL-1 / JCM 10045 / NBRC 100440</strain>
    </source>
</reference>
<reference key="2">
    <citation type="journal article" date="2003" name="Nucleic Acids Res.">
        <title>A nomenclature for restriction enzymes, DNA methyltransferases, homing endonucleases and their genes.</title>
        <authorList>
            <person name="Roberts R.J."/>
            <person name="Belfort M."/>
            <person name="Bestor T."/>
            <person name="Bhagwat A.S."/>
            <person name="Bickle T.A."/>
            <person name="Bitinaite J."/>
            <person name="Blumenthal R.M."/>
            <person name="Degtyarev S.K."/>
            <person name="Dryden D.T."/>
            <person name="Dybvig K."/>
            <person name="Firman K."/>
            <person name="Gromova E.S."/>
            <person name="Gumport R.I."/>
            <person name="Halford S.E."/>
            <person name="Hattman S."/>
            <person name="Heitman J."/>
            <person name="Hornby D.P."/>
            <person name="Janulaitis A."/>
            <person name="Jeltsch A."/>
            <person name="Josephsen J."/>
            <person name="Kiss A."/>
            <person name="Klaenhammer T.R."/>
            <person name="Kobayashi I."/>
            <person name="Kong H."/>
            <person name="Krueger D.H."/>
            <person name="Lacks S."/>
            <person name="Marinus M.G."/>
            <person name="Miyahara M."/>
            <person name="Morgan R.D."/>
            <person name="Murray N.E."/>
            <person name="Nagaraja V."/>
            <person name="Piekarowicz A."/>
            <person name="Pingoud A."/>
            <person name="Raleigh E."/>
            <person name="Rao D.N."/>
            <person name="Reich N."/>
            <person name="Repin V.E."/>
            <person name="Selker E.U."/>
            <person name="Shaw P.C."/>
            <person name="Stein D.C."/>
            <person name="Stoddard B.L."/>
            <person name="Szybalski W."/>
            <person name="Trautner T.A."/>
            <person name="Van Etten J.L."/>
            <person name="Vitor J.M."/>
            <person name="Wilson G.G."/>
            <person name="Xu S.Y."/>
        </authorList>
    </citation>
    <scope>NOMENCLATURE</scope>
</reference>
<proteinExistence type="inferred from homology"/>